<comment type="function">
    <text evidence="1">Binds to 23S rRNA. Forms part of two intersubunit bridges in the 70S ribosome.</text>
</comment>
<comment type="subunit">
    <text evidence="1">Part of the 50S ribosomal subunit. Forms a cluster with proteins L3 and L19. In the 70S ribosome, L14 and L19 interact and together make contacts with the 16S rRNA in bridges B5 and B8.</text>
</comment>
<comment type="similarity">
    <text evidence="1">Belongs to the universal ribosomal protein uL14 family.</text>
</comment>
<dbReference type="EMBL" id="AP008937">
    <property type="protein sequence ID" value="BAG27841.1"/>
    <property type="molecule type" value="Genomic_DNA"/>
</dbReference>
<dbReference type="RefSeq" id="WP_003681590.1">
    <property type="nucleotide sequence ID" value="NC_010610.1"/>
</dbReference>
<dbReference type="SMR" id="B2GDV9"/>
<dbReference type="GeneID" id="83716118"/>
<dbReference type="KEGG" id="lfe:LAF_1505"/>
<dbReference type="eggNOG" id="COG0093">
    <property type="taxonomic scope" value="Bacteria"/>
</dbReference>
<dbReference type="HOGENOM" id="CLU_095071_2_1_9"/>
<dbReference type="Proteomes" id="UP000001697">
    <property type="component" value="Chromosome"/>
</dbReference>
<dbReference type="GO" id="GO:0022625">
    <property type="term" value="C:cytosolic large ribosomal subunit"/>
    <property type="evidence" value="ECO:0007669"/>
    <property type="project" value="TreeGrafter"/>
</dbReference>
<dbReference type="GO" id="GO:0070180">
    <property type="term" value="F:large ribosomal subunit rRNA binding"/>
    <property type="evidence" value="ECO:0007669"/>
    <property type="project" value="TreeGrafter"/>
</dbReference>
<dbReference type="GO" id="GO:0003735">
    <property type="term" value="F:structural constituent of ribosome"/>
    <property type="evidence" value="ECO:0007669"/>
    <property type="project" value="InterPro"/>
</dbReference>
<dbReference type="GO" id="GO:0006412">
    <property type="term" value="P:translation"/>
    <property type="evidence" value="ECO:0007669"/>
    <property type="project" value="UniProtKB-UniRule"/>
</dbReference>
<dbReference type="CDD" id="cd00337">
    <property type="entry name" value="Ribosomal_uL14"/>
    <property type="match status" value="1"/>
</dbReference>
<dbReference type="FunFam" id="2.40.150.20:FF:000001">
    <property type="entry name" value="50S ribosomal protein L14"/>
    <property type="match status" value="1"/>
</dbReference>
<dbReference type="Gene3D" id="2.40.150.20">
    <property type="entry name" value="Ribosomal protein L14"/>
    <property type="match status" value="1"/>
</dbReference>
<dbReference type="HAMAP" id="MF_01367">
    <property type="entry name" value="Ribosomal_uL14"/>
    <property type="match status" value="1"/>
</dbReference>
<dbReference type="InterPro" id="IPR000218">
    <property type="entry name" value="Ribosomal_uL14"/>
</dbReference>
<dbReference type="InterPro" id="IPR005745">
    <property type="entry name" value="Ribosomal_uL14_bac-type"/>
</dbReference>
<dbReference type="InterPro" id="IPR019972">
    <property type="entry name" value="Ribosomal_uL14_CS"/>
</dbReference>
<dbReference type="InterPro" id="IPR036853">
    <property type="entry name" value="Ribosomal_uL14_sf"/>
</dbReference>
<dbReference type="NCBIfam" id="TIGR01067">
    <property type="entry name" value="rplN_bact"/>
    <property type="match status" value="1"/>
</dbReference>
<dbReference type="PANTHER" id="PTHR11761">
    <property type="entry name" value="50S/60S RIBOSOMAL PROTEIN L14/L23"/>
    <property type="match status" value="1"/>
</dbReference>
<dbReference type="PANTHER" id="PTHR11761:SF3">
    <property type="entry name" value="LARGE RIBOSOMAL SUBUNIT PROTEIN UL14M"/>
    <property type="match status" value="1"/>
</dbReference>
<dbReference type="Pfam" id="PF00238">
    <property type="entry name" value="Ribosomal_L14"/>
    <property type="match status" value="1"/>
</dbReference>
<dbReference type="SMART" id="SM01374">
    <property type="entry name" value="Ribosomal_L14"/>
    <property type="match status" value="1"/>
</dbReference>
<dbReference type="SUPFAM" id="SSF50193">
    <property type="entry name" value="Ribosomal protein L14"/>
    <property type="match status" value="1"/>
</dbReference>
<dbReference type="PROSITE" id="PS00049">
    <property type="entry name" value="RIBOSOMAL_L14"/>
    <property type="match status" value="1"/>
</dbReference>
<sequence>MIQQESRLKVADNSGAREILVIKILGGSRVKTGNIGDIIVATVKQATPGGVVKKGDVVKAVVVRTKHGLHRKDGSYIKFDENAAVLINNDKSPKGTRIFGPIARELRDDDYMKIISLAPEVL</sequence>
<gene>
    <name evidence="1" type="primary">rplN</name>
    <name type="ordered locus">LAF_1505</name>
</gene>
<protein>
    <recommendedName>
        <fullName evidence="1">Large ribosomal subunit protein uL14</fullName>
    </recommendedName>
    <alternativeName>
        <fullName evidence="2">50S ribosomal protein L14</fullName>
    </alternativeName>
</protein>
<feature type="chain" id="PRO_1000144288" description="Large ribosomal subunit protein uL14">
    <location>
        <begin position="1"/>
        <end position="122"/>
    </location>
</feature>
<proteinExistence type="inferred from homology"/>
<reference key="1">
    <citation type="journal article" date="2008" name="DNA Res.">
        <title>Comparative genome analysis of Lactobacillus reuteri and Lactobacillus fermentum reveal a genomic island for reuterin and cobalamin production.</title>
        <authorList>
            <person name="Morita H."/>
            <person name="Toh H."/>
            <person name="Fukuda S."/>
            <person name="Horikawa H."/>
            <person name="Oshima K."/>
            <person name="Suzuki T."/>
            <person name="Murakami M."/>
            <person name="Hisamatsu S."/>
            <person name="Kato Y."/>
            <person name="Takizawa T."/>
            <person name="Fukuoka H."/>
            <person name="Yoshimura T."/>
            <person name="Itoh K."/>
            <person name="O'Sullivan D.J."/>
            <person name="McKay L.L."/>
            <person name="Ohno H."/>
            <person name="Kikuchi J."/>
            <person name="Masaoka T."/>
            <person name="Hattori M."/>
        </authorList>
    </citation>
    <scope>NUCLEOTIDE SEQUENCE [LARGE SCALE GENOMIC DNA]</scope>
    <source>
        <strain>NBRC 3956 / LMG 18251</strain>
    </source>
</reference>
<accession>B2GDV9</accession>
<organism>
    <name type="scientific">Limosilactobacillus fermentum (strain NBRC 3956 / LMG 18251)</name>
    <name type="common">Lactobacillus fermentum</name>
    <dbReference type="NCBI Taxonomy" id="334390"/>
    <lineage>
        <taxon>Bacteria</taxon>
        <taxon>Bacillati</taxon>
        <taxon>Bacillota</taxon>
        <taxon>Bacilli</taxon>
        <taxon>Lactobacillales</taxon>
        <taxon>Lactobacillaceae</taxon>
        <taxon>Limosilactobacillus</taxon>
    </lineage>
</organism>
<evidence type="ECO:0000255" key="1">
    <source>
        <dbReference type="HAMAP-Rule" id="MF_01367"/>
    </source>
</evidence>
<evidence type="ECO:0000305" key="2"/>
<keyword id="KW-1185">Reference proteome</keyword>
<keyword id="KW-0687">Ribonucleoprotein</keyword>
<keyword id="KW-0689">Ribosomal protein</keyword>
<keyword id="KW-0694">RNA-binding</keyword>
<keyword id="KW-0699">rRNA-binding</keyword>
<name>RL14_LIMF3</name>